<feature type="chain" id="PRO_0000239020" description="Adrenocortical dysplasia protein">
    <location>
        <begin position="1"/>
        <end position="416"/>
    </location>
</feature>
<feature type="region of interest" description="Interaction with POT1" evidence="1">
    <location>
        <begin position="156"/>
        <end position="245"/>
    </location>
</feature>
<feature type="region of interest" description="Disordered" evidence="3">
    <location>
        <begin position="234"/>
        <end position="306"/>
    </location>
</feature>
<feature type="short sequence motif" description="PWI">
    <location>
        <begin position="11"/>
        <end position="13"/>
    </location>
</feature>
<feature type="compositionally biased region" description="Polar residues" evidence="3">
    <location>
        <begin position="234"/>
        <end position="251"/>
    </location>
</feature>
<feature type="compositionally biased region" description="Low complexity" evidence="3">
    <location>
        <begin position="259"/>
        <end position="272"/>
    </location>
</feature>
<feature type="compositionally biased region" description="Polar residues" evidence="3">
    <location>
        <begin position="273"/>
        <end position="292"/>
    </location>
</feature>
<feature type="modified residue" description="Phosphoserine" evidence="10">
    <location>
        <position position="25"/>
    </location>
</feature>
<feature type="modified residue" description="Phosphoserine" evidence="10">
    <location>
        <position position="313"/>
    </location>
</feature>
<feature type="modified residue" description="Phosphoserine" evidence="10">
    <location>
        <position position="317"/>
    </location>
</feature>
<feature type="cross-link" description="Glycyl lysine isopeptide (Lys-Gly) (interchain with G-Cter in SUMO2)" evidence="2">
    <location>
        <position position="345"/>
    </location>
</feature>
<feature type="splice variant" id="VSP_019067" description="In isoform 4." evidence="7">
    <location>
        <begin position="1"/>
        <end position="253"/>
    </location>
</feature>
<feature type="splice variant" id="VSP_019068" description="In isoform 3." evidence="7">
    <location>
        <begin position="1"/>
        <end position="191"/>
    </location>
</feature>
<feature type="splice variant" id="VSP_019069" description="In isoform 5." evidence="6">
    <location>
        <begin position="1"/>
        <end position="158"/>
    </location>
</feature>
<feature type="splice variant" id="VSP_019070" description="In isoform 2." evidence="7">
    <location>
        <begin position="1"/>
        <end position="100"/>
    </location>
</feature>
<feature type="splice variant" id="VSP_019071" description="In isoform 2." evidence="7">
    <original>LRVQVAQDHAPAEFYLQVDRFNLLPTEQPRIQVTGC</original>
    <variation>MKLPPFVSSRALGIDLQVRGMGINNPDHLPPSSSPS</variation>
    <location>
        <begin position="101"/>
        <end position="136"/>
    </location>
</feature>
<feature type="splice variant" id="VSP_019072" description="In isoform 5." evidence="6">
    <original>SSSA</original>
    <variation>MLAP</variation>
    <location>
        <begin position="159"/>
        <end position="162"/>
    </location>
</feature>
<feature type="splice variant" id="VSP_019073" description="In isoform 3." evidence="7">
    <original>VLKGPCTTTPLTDWITSGSQAL</original>
    <variation>MCRENSMSVLRTTSQSLLLPVQ</variation>
    <location>
        <begin position="192"/>
        <end position="213"/>
    </location>
</feature>
<feature type="splice variant" id="VSP_019074" description="In isoform 5." evidence="6">
    <original>GKAVFTVSGSLLHIPEGEE</original>
    <variation>VSAGLFLGGFRGRVRQLPC</variation>
    <location>
        <begin position="214"/>
        <end position="232"/>
    </location>
</feature>
<feature type="splice variant" id="VSP_019075" description="In isoform 5." evidence="6">
    <location>
        <begin position="233"/>
        <end position="416"/>
    </location>
</feature>
<feature type="sequence conflict" description="In Ref. 2; BAE35904." evidence="8" ref="2">
    <original>A</original>
    <variation>T</variation>
    <location>
        <position position="158"/>
    </location>
</feature>
<feature type="sequence conflict" description="In Ref. 2; BAE20450." evidence="8" ref="2">
    <original>R</original>
    <variation>W</variation>
    <location>
        <position position="393"/>
    </location>
</feature>
<protein>
    <recommendedName>
        <fullName evidence="8">Adrenocortical dysplasia protein</fullName>
    </recommendedName>
</protein>
<proteinExistence type="evidence at protein level"/>
<sequence length="416" mass="44713">MSDSGLLALQPWIRELILGSETLSSPRTGQLLKVLQDSETPGPSSAPDTPDTGAVLLVSDGTHSVRCVVTRNAIDTSDWEEKELGFRGTEGRLLLLQACGLRVQVAQDHAPAEFYLQVDRFNLLPTEQPRIQVTGCNQDSDVQRKLNECLEDHLSESASSSAGLTLSQLLDEVREDQDHRGALVCLAKSCLVLKGPCTTTPLTDWITSGSQALGKAVFTVSGSLLHIPEGEEQILSSTGSSQKARGTSASPSHMPLEESGASVSLLSALATSDPGQMDSSQSPPAVGSTSPRAQAPTSPPCNSTPSSLLLNCSPSLSPLHPAPRSHQSCETRAQAPKLEFQCSFKKRQLLPRTSAQELCSVWEPPERHRDTSAFQYKYETPSASLHTQVQTARLSPQLVAWALNIVMESESELTQV</sequence>
<evidence type="ECO:0000250" key="1"/>
<evidence type="ECO:0000250" key="2">
    <source>
        <dbReference type="UniProtKB" id="Q96AP0"/>
    </source>
</evidence>
<evidence type="ECO:0000256" key="3">
    <source>
        <dbReference type="SAM" id="MobiDB-lite"/>
    </source>
</evidence>
<evidence type="ECO:0000269" key="4">
    <source>
    </source>
</evidence>
<evidence type="ECO:0000269" key="5">
    <source>
    </source>
</evidence>
<evidence type="ECO:0000303" key="6">
    <source>
    </source>
</evidence>
<evidence type="ECO:0000303" key="7">
    <source>
    </source>
</evidence>
<evidence type="ECO:0000305" key="8"/>
<evidence type="ECO:0000312" key="9">
    <source>
        <dbReference type="MGI" id="MGI:87873"/>
    </source>
</evidence>
<evidence type="ECO:0007744" key="10">
    <source>
    </source>
</evidence>
<keyword id="KW-0025">Alternative splicing</keyword>
<keyword id="KW-0158">Chromosome</keyword>
<keyword id="KW-0238">DNA-binding</keyword>
<keyword id="KW-1017">Isopeptide bond</keyword>
<keyword id="KW-0539">Nucleus</keyword>
<keyword id="KW-0597">Phosphoprotein</keyword>
<keyword id="KW-1185">Reference proteome</keyword>
<keyword id="KW-0779">Telomere</keyword>
<keyword id="KW-0832">Ubl conjugation</keyword>
<name>ACD_MOUSE</name>
<organism>
    <name type="scientific">Mus musculus</name>
    <name type="common">Mouse</name>
    <dbReference type="NCBI Taxonomy" id="10090"/>
    <lineage>
        <taxon>Eukaryota</taxon>
        <taxon>Metazoa</taxon>
        <taxon>Chordata</taxon>
        <taxon>Craniata</taxon>
        <taxon>Vertebrata</taxon>
        <taxon>Euteleostomi</taxon>
        <taxon>Mammalia</taxon>
        <taxon>Eutheria</taxon>
        <taxon>Euarchontoglires</taxon>
        <taxon>Glires</taxon>
        <taxon>Rodentia</taxon>
        <taxon>Myomorpha</taxon>
        <taxon>Muroidea</taxon>
        <taxon>Muridae</taxon>
        <taxon>Murinae</taxon>
        <taxon>Mus</taxon>
        <taxon>Mus</taxon>
    </lineage>
</organism>
<gene>
    <name evidence="9" type="primary">Acd</name>
</gene>
<accession>Q5EE38</accession>
<accession>Q3TBB1</accession>
<accession>Q3TUR7</accession>
<accession>Q3UKL6</accession>
<accession>Q3V3Y1</accession>
<accession>Q99KF8</accession>
<dbReference type="EMBL" id="AY902197">
    <property type="protein sequence ID" value="AAW82804.1"/>
    <property type="molecule type" value="Genomic_DNA"/>
</dbReference>
<dbReference type="EMBL" id="AK030405">
    <property type="protein sequence ID" value="BAE20450.1"/>
    <property type="molecule type" value="mRNA"/>
</dbReference>
<dbReference type="EMBL" id="AK032683">
    <property type="protein sequence ID" value="BAE43282.1"/>
    <property type="molecule type" value="mRNA"/>
</dbReference>
<dbReference type="EMBL" id="AK145959">
    <property type="protein sequence ID" value="BAE26785.1"/>
    <property type="molecule type" value="mRNA"/>
</dbReference>
<dbReference type="EMBL" id="AK160599">
    <property type="protein sequence ID" value="BAE35904.1"/>
    <property type="molecule type" value="mRNA"/>
</dbReference>
<dbReference type="EMBL" id="AK171345">
    <property type="protein sequence ID" value="BAE42403.1"/>
    <property type="molecule type" value="mRNA"/>
</dbReference>
<dbReference type="EMBL" id="BC004682">
    <property type="protein sequence ID" value="AAH04682.1"/>
    <property type="molecule type" value="mRNA"/>
</dbReference>
<dbReference type="CCDS" id="CCDS22608.1">
    <molecule id="Q5EE38-1"/>
</dbReference>
<dbReference type="RefSeq" id="NP_001012656.1">
    <molecule id="Q5EE38-1"/>
    <property type="nucleotide sequence ID" value="NM_001012638.3"/>
</dbReference>
<dbReference type="RefSeq" id="NP_001335278.1">
    <molecule id="Q5EE38-3"/>
    <property type="nucleotide sequence ID" value="NM_001348349.2"/>
</dbReference>
<dbReference type="RefSeq" id="XP_006531237.1">
    <molecule id="Q5EE38-3"/>
    <property type="nucleotide sequence ID" value="XM_006531174.5"/>
</dbReference>
<dbReference type="RefSeq" id="XP_006531238.1">
    <molecule id="Q5EE38-3"/>
    <property type="nucleotide sequence ID" value="XM_006531175.4"/>
</dbReference>
<dbReference type="RefSeq" id="XP_006531239.1">
    <property type="nucleotide sequence ID" value="XM_006531176.2"/>
</dbReference>
<dbReference type="RefSeq" id="XP_011246737.1">
    <molecule id="Q5EE38-3"/>
    <property type="nucleotide sequence ID" value="XM_011248435.4"/>
</dbReference>
<dbReference type="RefSeq" id="XP_017168377.1">
    <property type="nucleotide sequence ID" value="XM_017312888.1"/>
</dbReference>
<dbReference type="RefSeq" id="XP_030099521.1">
    <molecule id="Q5EE38-3"/>
    <property type="nucleotide sequence ID" value="XM_030243661.2"/>
</dbReference>
<dbReference type="SMR" id="Q5EE38"/>
<dbReference type="ComplexPortal" id="CPX-153">
    <property type="entry name" value="Shelterin complex"/>
</dbReference>
<dbReference type="DIP" id="DIP-29612N"/>
<dbReference type="FunCoup" id="Q5EE38">
    <property type="interactions" value="1282"/>
</dbReference>
<dbReference type="IntAct" id="Q5EE38">
    <property type="interactions" value="9"/>
</dbReference>
<dbReference type="STRING" id="10090.ENSMUSP00000048180"/>
<dbReference type="GlyGen" id="Q5EE38">
    <property type="glycosylation" value="2 sites"/>
</dbReference>
<dbReference type="iPTMnet" id="Q5EE38"/>
<dbReference type="PhosphoSitePlus" id="Q5EE38"/>
<dbReference type="jPOST" id="Q5EE38"/>
<dbReference type="PaxDb" id="10090-ENSMUSP00000048180"/>
<dbReference type="PeptideAtlas" id="Q5EE38"/>
<dbReference type="ProteomicsDB" id="285971">
    <molecule id="Q5EE38-1"/>
</dbReference>
<dbReference type="ProteomicsDB" id="285972">
    <molecule id="Q5EE38-2"/>
</dbReference>
<dbReference type="ProteomicsDB" id="285973">
    <molecule id="Q5EE38-3"/>
</dbReference>
<dbReference type="ProteomicsDB" id="285974">
    <molecule id="Q5EE38-4"/>
</dbReference>
<dbReference type="Pumba" id="Q5EE38"/>
<dbReference type="Antibodypedia" id="29595">
    <property type="antibodies" value="352 antibodies from 26 providers"/>
</dbReference>
<dbReference type="DNASU" id="497652"/>
<dbReference type="Ensembl" id="ENSMUST00000042608.8">
    <molecule id="Q5EE38-1"/>
    <property type="protein sequence ID" value="ENSMUSP00000048180.7"/>
    <property type="gene ID" value="ENSMUSG00000038000.11"/>
</dbReference>
<dbReference type="GeneID" id="497652"/>
<dbReference type="KEGG" id="mmu:497652"/>
<dbReference type="UCSC" id="uc009ndq.1">
    <molecule id="Q5EE38-1"/>
    <property type="organism name" value="mouse"/>
</dbReference>
<dbReference type="UCSC" id="uc009ndr.1">
    <molecule id="Q5EE38-4"/>
    <property type="organism name" value="mouse"/>
</dbReference>
<dbReference type="UCSC" id="uc009ndt.1">
    <molecule id="Q5EE38-3"/>
    <property type="organism name" value="mouse"/>
</dbReference>
<dbReference type="AGR" id="MGI:87873"/>
<dbReference type="CTD" id="65057"/>
<dbReference type="MGI" id="MGI:87873">
    <property type="gene designation" value="Acd"/>
</dbReference>
<dbReference type="VEuPathDB" id="HostDB:ENSMUSG00000038000"/>
<dbReference type="eggNOG" id="ENOG502SAN8">
    <property type="taxonomic scope" value="Eukaryota"/>
</dbReference>
<dbReference type="GeneTree" id="ENSGT00390000004877"/>
<dbReference type="HOGENOM" id="CLU_619569_0_0_1"/>
<dbReference type="InParanoid" id="Q5EE38"/>
<dbReference type="OMA" id="FDCLEEH"/>
<dbReference type="OrthoDB" id="9899304at2759"/>
<dbReference type="PhylomeDB" id="Q5EE38"/>
<dbReference type="TreeFam" id="TF338536"/>
<dbReference type="Reactome" id="R-MMU-110330">
    <property type="pathway name" value="Recognition and association of DNA glycosylase with site containing an affected purine"/>
</dbReference>
<dbReference type="Reactome" id="R-MMU-110331">
    <property type="pathway name" value="Cleavage of the damaged purine"/>
</dbReference>
<dbReference type="Reactome" id="R-MMU-171319">
    <property type="pathway name" value="Telomere Extension By Telomerase"/>
</dbReference>
<dbReference type="Reactome" id="R-MMU-174411">
    <property type="pathway name" value="Polymerase switching on the C-strand of the telomere"/>
</dbReference>
<dbReference type="Reactome" id="R-MMU-174414">
    <property type="pathway name" value="Processive synthesis on the C-strand of the telomere"/>
</dbReference>
<dbReference type="Reactome" id="R-MMU-174417">
    <property type="pathway name" value="Telomere C-strand (Lagging Strand) Synthesis"/>
</dbReference>
<dbReference type="Reactome" id="R-MMU-174430">
    <property type="pathway name" value="Telomere C-strand synthesis initiation"/>
</dbReference>
<dbReference type="Reactome" id="R-MMU-174437">
    <property type="pathway name" value="Removal of the Flap Intermediate from the C-strand"/>
</dbReference>
<dbReference type="Reactome" id="R-MMU-2559586">
    <property type="pathway name" value="DNA Damage/Telomere Stress Induced Senescence"/>
</dbReference>
<dbReference type="Reactome" id="R-MMU-9670095">
    <property type="pathway name" value="Inhibition of DNA recombination at telomere"/>
</dbReference>
<dbReference type="BioGRID-ORCS" id="497652">
    <property type="hits" value="15 hits in 78 CRISPR screens"/>
</dbReference>
<dbReference type="ChiTaRS" id="Acd">
    <property type="organism name" value="mouse"/>
</dbReference>
<dbReference type="PRO" id="PR:Q5EE38"/>
<dbReference type="Proteomes" id="UP000000589">
    <property type="component" value="Chromosome 8"/>
</dbReference>
<dbReference type="RNAct" id="Q5EE38">
    <property type="molecule type" value="protein"/>
</dbReference>
<dbReference type="Bgee" id="ENSMUSG00000038000">
    <property type="expression patterns" value="Expressed in animal zygote and 214 other cell types or tissues"/>
</dbReference>
<dbReference type="ExpressionAtlas" id="Q5EE38">
    <property type="expression patterns" value="baseline and differential"/>
</dbReference>
<dbReference type="GO" id="GO:0000781">
    <property type="term" value="C:chromosome, telomeric region"/>
    <property type="evidence" value="ECO:0000314"/>
    <property type="project" value="BHF-UCL"/>
</dbReference>
<dbReference type="GO" id="GO:0016604">
    <property type="term" value="C:nuclear body"/>
    <property type="evidence" value="ECO:0007669"/>
    <property type="project" value="Ensembl"/>
</dbReference>
<dbReference type="GO" id="GO:0000783">
    <property type="term" value="C:nuclear telomere cap complex"/>
    <property type="evidence" value="ECO:0000314"/>
    <property type="project" value="BHF-UCL"/>
</dbReference>
<dbReference type="GO" id="GO:0005654">
    <property type="term" value="C:nucleoplasm"/>
    <property type="evidence" value="ECO:0000304"/>
    <property type="project" value="Reactome"/>
</dbReference>
<dbReference type="GO" id="GO:0070187">
    <property type="term" value="C:shelterin complex"/>
    <property type="evidence" value="ECO:0000266"/>
    <property type="project" value="ComplexPortal"/>
</dbReference>
<dbReference type="GO" id="GO:0005697">
    <property type="term" value="C:telomerase holoenzyme complex"/>
    <property type="evidence" value="ECO:0007669"/>
    <property type="project" value="InterPro"/>
</dbReference>
<dbReference type="GO" id="GO:0070182">
    <property type="term" value="F:DNA polymerase binding"/>
    <property type="evidence" value="ECO:0007669"/>
    <property type="project" value="Ensembl"/>
</dbReference>
<dbReference type="GO" id="GO:0044877">
    <property type="term" value="F:protein-containing complex binding"/>
    <property type="evidence" value="ECO:0007669"/>
    <property type="project" value="Ensembl"/>
</dbReference>
<dbReference type="GO" id="GO:0010521">
    <property type="term" value="F:telomerase inhibitor activity"/>
    <property type="evidence" value="ECO:0007669"/>
    <property type="project" value="Ensembl"/>
</dbReference>
<dbReference type="GO" id="GO:0042162">
    <property type="term" value="F:telomeric DNA binding"/>
    <property type="evidence" value="ECO:0000314"/>
    <property type="project" value="BHF-UCL"/>
</dbReference>
<dbReference type="GO" id="GO:0030326">
    <property type="term" value="P:embryonic limb morphogenesis"/>
    <property type="evidence" value="ECO:0000315"/>
    <property type="project" value="MGI"/>
</dbReference>
<dbReference type="GO" id="GO:0070200">
    <property type="term" value="P:establishment of protein localization to telomere"/>
    <property type="evidence" value="ECO:0007669"/>
    <property type="project" value="Ensembl"/>
</dbReference>
<dbReference type="GO" id="GO:0006886">
    <property type="term" value="P:intracellular protein transport"/>
    <property type="evidence" value="ECO:0007669"/>
    <property type="project" value="Ensembl"/>
</dbReference>
<dbReference type="GO" id="GO:0032211">
    <property type="term" value="P:negative regulation of telomere maintenance via telomerase"/>
    <property type="evidence" value="ECO:0007669"/>
    <property type="project" value="Ensembl"/>
</dbReference>
<dbReference type="GO" id="GO:0032206">
    <property type="term" value="P:positive regulation of telomere maintenance"/>
    <property type="evidence" value="ECO:0000303"/>
    <property type="project" value="ComplexPortal"/>
</dbReference>
<dbReference type="GO" id="GO:0031848">
    <property type="term" value="P:protection from non-homologous end joining at telomere"/>
    <property type="evidence" value="ECO:0000315"/>
    <property type="project" value="BHF-UCL"/>
</dbReference>
<dbReference type="GO" id="GO:0070203">
    <property type="term" value="P:regulation of establishment of protein localization to telomere"/>
    <property type="evidence" value="ECO:0007669"/>
    <property type="project" value="Ensembl"/>
</dbReference>
<dbReference type="GO" id="GO:0035282">
    <property type="term" value="P:segmentation"/>
    <property type="evidence" value="ECO:0000315"/>
    <property type="project" value="MGI"/>
</dbReference>
<dbReference type="GO" id="GO:0001501">
    <property type="term" value="P:skeletal system development"/>
    <property type="evidence" value="ECO:0000315"/>
    <property type="project" value="MGI"/>
</dbReference>
<dbReference type="GO" id="GO:0032202">
    <property type="term" value="P:telomere assembly"/>
    <property type="evidence" value="ECO:0007669"/>
    <property type="project" value="Ensembl"/>
</dbReference>
<dbReference type="GO" id="GO:0016233">
    <property type="term" value="P:telomere capping"/>
    <property type="evidence" value="ECO:0000315"/>
    <property type="project" value="BHF-UCL"/>
</dbReference>
<dbReference type="GO" id="GO:0000723">
    <property type="term" value="P:telomere maintenance"/>
    <property type="evidence" value="ECO:0000266"/>
    <property type="project" value="MGI"/>
</dbReference>
<dbReference type="GO" id="GO:0007004">
    <property type="term" value="P:telomere maintenance via telomerase"/>
    <property type="evidence" value="ECO:0007669"/>
    <property type="project" value="Ensembl"/>
</dbReference>
<dbReference type="GO" id="GO:0001655">
    <property type="term" value="P:urogenital system development"/>
    <property type="evidence" value="ECO:0000315"/>
    <property type="project" value="MGI"/>
</dbReference>
<dbReference type="FunFam" id="2.40.50.960:FF:000001">
    <property type="entry name" value="ACD, shelterin complex subunit and telomerase recruitment factor"/>
    <property type="match status" value="1"/>
</dbReference>
<dbReference type="Gene3D" id="2.40.50.960">
    <property type="match status" value="1"/>
</dbReference>
<dbReference type="InterPro" id="IPR028631">
    <property type="entry name" value="ACD"/>
</dbReference>
<dbReference type="InterPro" id="IPR019437">
    <property type="entry name" value="TPP1/Est3"/>
</dbReference>
<dbReference type="PANTHER" id="PTHR14487">
    <property type="entry name" value="ADRENOCORTICAL DYSPLASIA PROTEIN ACD"/>
    <property type="match status" value="1"/>
</dbReference>
<dbReference type="PANTHER" id="PTHR14487:SF3">
    <property type="entry name" value="ADRENOCORTICAL DYSPLASIA PROTEIN HOMOLOG"/>
    <property type="match status" value="1"/>
</dbReference>
<dbReference type="Pfam" id="PF10341">
    <property type="entry name" value="TPP1"/>
    <property type="match status" value="1"/>
</dbReference>
<comment type="function">
    <text evidence="2 4">Component of the shelterin complex (telosome) that is involved in the regulation of telomere length and protection. Shelterin associates with arrays of double-stranded TTAGGG repeats added by telomerase and protects chromosome ends. Without its protective activity, telomeres are no longer hidden from the DNA damage surveillance and chromosome ends are inappropriately processed by DNA repair pathways. Promotes binding of POT1 to single-stranded telomeric DNA. Modulates the inhibitory effects of POT1 on telomere elongation. The ACD-POT1 heterodimer enhances telomere elongation by recruiting telomerase to telomeres and increasing its processivity (By similarity). May play a role in organogenesis (PubMed:15537664).</text>
</comment>
<comment type="subunit">
    <text evidence="2 5">Component of the shelterin complex (telosome) composed of TERF1, TERF2, TINF2, TERF2IP ACD and POT1. Forms heterodimers with POT1. Identified in a complex with POT1 and single-stranded telomeric DNA. Interacts with STN1 and TINF2.</text>
</comment>
<comment type="interaction">
    <interactant intactId="EBI-6258642">
        <id>Q5EE38</id>
    </interactant>
    <interactant intactId="EBI-2553883">
        <id>Q8K2X3</id>
        <label>Stn1</label>
    </interactant>
    <organismsDiffer>false</organismsDiffer>
    <experiments>2</experiments>
</comment>
<comment type="interaction">
    <interactant intactId="EBI-15647355">
        <id>Q5EE38-1</id>
    </interactant>
    <interactant intactId="EBI-7051001">
        <id>Q91WC1</id>
        <label>Pot1</label>
    </interactant>
    <organismsDiffer>false</organismsDiffer>
    <experiments>2</experiments>
</comment>
<comment type="interaction">
    <interactant intactId="EBI-15647355">
        <id>Q5EE38-1</id>
    </interactant>
    <interactant intactId="EBI-15647404">
        <id>Q3TNS5</id>
        <label>Pot1b</label>
    </interactant>
    <organismsDiffer>false</organismsDiffer>
    <experiments>2</experiments>
</comment>
<comment type="subcellular location">
    <subcellularLocation>
        <location evidence="2">Nucleus</location>
    </subcellularLocation>
    <subcellularLocation>
        <location evidence="2">Chromosome</location>
        <location evidence="2">Telomere</location>
    </subcellularLocation>
</comment>
<comment type="alternative products">
    <event type="alternative splicing"/>
    <isoform>
        <id>Q5EE38-1</id>
        <name>1</name>
        <sequence type="displayed"/>
    </isoform>
    <isoform>
        <id>Q5EE38-2</id>
        <name>2</name>
        <sequence type="described" ref="VSP_019070 VSP_019071"/>
    </isoform>
    <isoform>
        <id>Q5EE38-3</id>
        <name>3</name>
        <sequence type="described" ref="VSP_019068 VSP_019073"/>
    </isoform>
    <isoform>
        <id>Q5EE38-4</id>
        <name>4</name>
        <sequence type="described" ref="VSP_019067"/>
    </isoform>
    <isoform>
        <id>Q5EE38-5</id>
        <name>5</name>
        <sequence type="described" ref="VSP_019069 VSP_019072 VSP_019074 VSP_019075"/>
    </isoform>
</comment>
<comment type="tissue specificity">
    <text evidence="4">Ubiquitous.</text>
</comment>
<comment type="developmental stage">
    <text evidence="4">Expressed from 7 dpc to 18 dpc throughout development.</text>
</comment>
<comment type="disease">
    <text>Defects in Acd are the cause of adrenocortical dysplasia (ACD). ACD is a spontaneous autosomal recessive mouse mutant resulting from spontaneous splicing mutation of acd. ACD mice are characterized by developmental defects in organs derived from the urogenital ridge, reduced survival, poor growth, skin hyperpigmentation and adrenal insufficiency. Forty percent of the mutants died within 24 hours. Analysis of 14.5 dpc to 17.5 dpc embryos revealed reduced formation of caudal structure as well as limb defects.</text>
</comment>
<comment type="miscellaneous">
    <text>Adrenocortical dysplasia mouse was initially reported as a model of human congenital adrenal hypoplasia (AHC).</text>
</comment>
<reference key="1">
    <citation type="journal article" date="2005" name="Hum. Mol. Genet.">
        <title>Urogenital and caudal dysgenesis in adrenocortical dysplasia (acd) mice is caused by a splicing mutation in a novel telomeric regulator.</title>
        <authorList>
            <person name="Keegan C.E."/>
            <person name="Hutz J.E."/>
            <person name="Else T."/>
            <person name="Adamska M."/>
            <person name="Shah S.P."/>
            <person name="Kent A.E."/>
            <person name="Howes J.M."/>
            <person name="Beamer W.G."/>
            <person name="Hammer G.D."/>
        </authorList>
    </citation>
    <scope>NUCLEOTIDE SEQUENCE [GENOMIC DNA]</scope>
    <scope>ALTERNATIVE SPLICING (ISOFORM 1)</scope>
    <scope>DEVELOPMENTAL STAGE</scope>
    <scope>TISSUE SPECIFICITY</scope>
    <scope>FUNCTION</scope>
    <scope>INVOLVEMENT IN ACD</scope>
    <source>
        <strain>DW/J</strain>
    </source>
</reference>
<reference key="2">
    <citation type="journal article" date="2005" name="Science">
        <title>The transcriptional landscape of the mammalian genome.</title>
        <authorList>
            <person name="Carninci P."/>
            <person name="Kasukawa T."/>
            <person name="Katayama S."/>
            <person name="Gough J."/>
            <person name="Frith M.C."/>
            <person name="Maeda N."/>
            <person name="Oyama R."/>
            <person name="Ravasi T."/>
            <person name="Lenhard B."/>
            <person name="Wells C."/>
            <person name="Kodzius R."/>
            <person name="Shimokawa K."/>
            <person name="Bajic V.B."/>
            <person name="Brenner S.E."/>
            <person name="Batalov S."/>
            <person name="Forrest A.R."/>
            <person name="Zavolan M."/>
            <person name="Davis M.J."/>
            <person name="Wilming L.G."/>
            <person name="Aidinis V."/>
            <person name="Allen J.E."/>
            <person name="Ambesi-Impiombato A."/>
            <person name="Apweiler R."/>
            <person name="Aturaliya R.N."/>
            <person name="Bailey T.L."/>
            <person name="Bansal M."/>
            <person name="Baxter L."/>
            <person name="Beisel K.W."/>
            <person name="Bersano T."/>
            <person name="Bono H."/>
            <person name="Chalk A.M."/>
            <person name="Chiu K.P."/>
            <person name="Choudhary V."/>
            <person name="Christoffels A."/>
            <person name="Clutterbuck D.R."/>
            <person name="Crowe M.L."/>
            <person name="Dalla E."/>
            <person name="Dalrymple B.P."/>
            <person name="de Bono B."/>
            <person name="Della Gatta G."/>
            <person name="di Bernardo D."/>
            <person name="Down T."/>
            <person name="Engstrom P."/>
            <person name="Fagiolini M."/>
            <person name="Faulkner G."/>
            <person name="Fletcher C.F."/>
            <person name="Fukushima T."/>
            <person name="Furuno M."/>
            <person name="Futaki S."/>
            <person name="Gariboldi M."/>
            <person name="Georgii-Hemming P."/>
            <person name="Gingeras T.R."/>
            <person name="Gojobori T."/>
            <person name="Green R.E."/>
            <person name="Gustincich S."/>
            <person name="Harbers M."/>
            <person name="Hayashi Y."/>
            <person name="Hensch T.K."/>
            <person name="Hirokawa N."/>
            <person name="Hill D."/>
            <person name="Huminiecki L."/>
            <person name="Iacono M."/>
            <person name="Ikeo K."/>
            <person name="Iwama A."/>
            <person name="Ishikawa T."/>
            <person name="Jakt M."/>
            <person name="Kanapin A."/>
            <person name="Katoh M."/>
            <person name="Kawasawa Y."/>
            <person name="Kelso J."/>
            <person name="Kitamura H."/>
            <person name="Kitano H."/>
            <person name="Kollias G."/>
            <person name="Krishnan S.P."/>
            <person name="Kruger A."/>
            <person name="Kummerfeld S.K."/>
            <person name="Kurochkin I.V."/>
            <person name="Lareau L.F."/>
            <person name="Lazarevic D."/>
            <person name="Lipovich L."/>
            <person name="Liu J."/>
            <person name="Liuni S."/>
            <person name="McWilliam S."/>
            <person name="Madan Babu M."/>
            <person name="Madera M."/>
            <person name="Marchionni L."/>
            <person name="Matsuda H."/>
            <person name="Matsuzawa S."/>
            <person name="Miki H."/>
            <person name="Mignone F."/>
            <person name="Miyake S."/>
            <person name="Morris K."/>
            <person name="Mottagui-Tabar S."/>
            <person name="Mulder N."/>
            <person name="Nakano N."/>
            <person name="Nakauchi H."/>
            <person name="Ng P."/>
            <person name="Nilsson R."/>
            <person name="Nishiguchi S."/>
            <person name="Nishikawa S."/>
            <person name="Nori F."/>
            <person name="Ohara O."/>
            <person name="Okazaki Y."/>
            <person name="Orlando V."/>
            <person name="Pang K.C."/>
            <person name="Pavan W.J."/>
            <person name="Pavesi G."/>
            <person name="Pesole G."/>
            <person name="Petrovsky N."/>
            <person name="Piazza S."/>
            <person name="Reed J."/>
            <person name="Reid J.F."/>
            <person name="Ring B.Z."/>
            <person name="Ringwald M."/>
            <person name="Rost B."/>
            <person name="Ruan Y."/>
            <person name="Salzberg S.L."/>
            <person name="Sandelin A."/>
            <person name="Schneider C."/>
            <person name="Schoenbach C."/>
            <person name="Sekiguchi K."/>
            <person name="Semple C.A."/>
            <person name="Seno S."/>
            <person name="Sessa L."/>
            <person name="Sheng Y."/>
            <person name="Shibata Y."/>
            <person name="Shimada H."/>
            <person name="Shimada K."/>
            <person name="Silva D."/>
            <person name="Sinclair B."/>
            <person name="Sperling S."/>
            <person name="Stupka E."/>
            <person name="Sugiura K."/>
            <person name="Sultana R."/>
            <person name="Takenaka Y."/>
            <person name="Taki K."/>
            <person name="Tammoja K."/>
            <person name="Tan S.L."/>
            <person name="Tang S."/>
            <person name="Taylor M.S."/>
            <person name="Tegner J."/>
            <person name="Teichmann S.A."/>
            <person name="Ueda H.R."/>
            <person name="van Nimwegen E."/>
            <person name="Verardo R."/>
            <person name="Wei C.L."/>
            <person name="Yagi K."/>
            <person name="Yamanishi H."/>
            <person name="Zabarovsky E."/>
            <person name="Zhu S."/>
            <person name="Zimmer A."/>
            <person name="Hide W."/>
            <person name="Bult C."/>
            <person name="Grimmond S.M."/>
            <person name="Teasdale R.D."/>
            <person name="Liu E.T."/>
            <person name="Brusic V."/>
            <person name="Quackenbush J."/>
            <person name="Wahlestedt C."/>
            <person name="Mattick J.S."/>
            <person name="Hume D.A."/>
            <person name="Kai C."/>
            <person name="Sasaki D."/>
            <person name="Tomaru Y."/>
            <person name="Fukuda S."/>
            <person name="Kanamori-Katayama M."/>
            <person name="Suzuki M."/>
            <person name="Aoki J."/>
            <person name="Arakawa T."/>
            <person name="Iida J."/>
            <person name="Imamura K."/>
            <person name="Itoh M."/>
            <person name="Kato T."/>
            <person name="Kawaji H."/>
            <person name="Kawagashira N."/>
            <person name="Kawashima T."/>
            <person name="Kojima M."/>
            <person name="Kondo S."/>
            <person name="Konno H."/>
            <person name="Nakano K."/>
            <person name="Ninomiya N."/>
            <person name="Nishio T."/>
            <person name="Okada M."/>
            <person name="Plessy C."/>
            <person name="Shibata K."/>
            <person name="Shiraki T."/>
            <person name="Suzuki S."/>
            <person name="Tagami M."/>
            <person name="Waki K."/>
            <person name="Watahiki A."/>
            <person name="Okamura-Oho Y."/>
            <person name="Suzuki H."/>
            <person name="Kawai J."/>
            <person name="Hayashizaki Y."/>
        </authorList>
    </citation>
    <scope>NUCLEOTIDE SEQUENCE [LARGE SCALE MRNA] (ISOFORMS 1; 2; 3 AND 4)</scope>
    <source>
        <strain>C57BL/6J</strain>
        <tissue>Adrenal gland</tissue>
        <tissue>Cerebellum</tissue>
        <tissue>Embryo</tissue>
        <tissue>Pituitary</tissue>
        <tissue>Placenta</tissue>
    </source>
</reference>
<reference key="3">
    <citation type="journal article" date="2004" name="Genome Res.">
        <title>The status, quality, and expansion of the NIH full-length cDNA project: the Mammalian Gene Collection (MGC).</title>
        <authorList>
            <consortium name="The MGC Project Team"/>
        </authorList>
    </citation>
    <scope>NUCLEOTIDE SEQUENCE [LARGE SCALE MRNA] (ISOFORM 5)</scope>
    <source>
        <strain>Czech II</strain>
        <tissue>Mammary gland</tissue>
    </source>
</reference>
<reference key="4">
    <citation type="journal article" date="2009" name="J. Biol. Chem.">
        <title>OB fold-containing protein 1 (OBFC1), a human homolog of yeast Stn1, associates with TPP1 and is implicated in telomere length regulation.</title>
        <authorList>
            <person name="Wan M."/>
            <person name="Qin J."/>
            <person name="Songyang Z."/>
            <person name="Liu D."/>
        </authorList>
    </citation>
    <scope>INTERACTION WITH STN1</scope>
</reference>
<reference key="5">
    <citation type="journal article" date="2010" name="Cell">
        <title>A tissue-specific atlas of mouse protein phosphorylation and expression.</title>
        <authorList>
            <person name="Huttlin E.L."/>
            <person name="Jedrychowski M.P."/>
            <person name="Elias J.E."/>
            <person name="Goswami T."/>
            <person name="Rad R."/>
            <person name="Beausoleil S.A."/>
            <person name="Villen J."/>
            <person name="Haas W."/>
            <person name="Sowa M.E."/>
            <person name="Gygi S.P."/>
        </authorList>
    </citation>
    <scope>PHOSPHORYLATION [LARGE SCALE ANALYSIS] AT SER-25; SER-313 AND SER-317</scope>
    <scope>IDENTIFICATION BY MASS SPECTROMETRY [LARGE SCALE ANALYSIS]</scope>
    <source>
        <tissue>Liver</tissue>
        <tissue>Lung</tissue>
        <tissue>Spleen</tissue>
        <tissue>Testis</tissue>
    </source>
</reference>